<proteinExistence type="inferred from homology"/>
<comment type="function">
    <text evidence="1">Catalyzes the conversion of 4-hydroxy-tetrahydrodipicolinate (HTPA) to tetrahydrodipicolinate.</text>
</comment>
<comment type="catalytic activity">
    <reaction evidence="1">
        <text>(S)-2,3,4,5-tetrahydrodipicolinate + NAD(+) + H2O = (2S,4S)-4-hydroxy-2,3,4,5-tetrahydrodipicolinate + NADH + H(+)</text>
        <dbReference type="Rhea" id="RHEA:35323"/>
        <dbReference type="ChEBI" id="CHEBI:15377"/>
        <dbReference type="ChEBI" id="CHEBI:15378"/>
        <dbReference type="ChEBI" id="CHEBI:16845"/>
        <dbReference type="ChEBI" id="CHEBI:57540"/>
        <dbReference type="ChEBI" id="CHEBI:57945"/>
        <dbReference type="ChEBI" id="CHEBI:67139"/>
        <dbReference type="EC" id="1.17.1.8"/>
    </reaction>
</comment>
<comment type="catalytic activity">
    <reaction evidence="1">
        <text>(S)-2,3,4,5-tetrahydrodipicolinate + NADP(+) + H2O = (2S,4S)-4-hydroxy-2,3,4,5-tetrahydrodipicolinate + NADPH + H(+)</text>
        <dbReference type="Rhea" id="RHEA:35331"/>
        <dbReference type="ChEBI" id="CHEBI:15377"/>
        <dbReference type="ChEBI" id="CHEBI:15378"/>
        <dbReference type="ChEBI" id="CHEBI:16845"/>
        <dbReference type="ChEBI" id="CHEBI:57783"/>
        <dbReference type="ChEBI" id="CHEBI:58349"/>
        <dbReference type="ChEBI" id="CHEBI:67139"/>
        <dbReference type="EC" id="1.17.1.8"/>
    </reaction>
</comment>
<comment type="pathway">
    <text evidence="1">Amino-acid biosynthesis; L-lysine biosynthesis via DAP pathway; (S)-tetrahydrodipicolinate from L-aspartate: step 4/4.</text>
</comment>
<comment type="subunit">
    <text evidence="1">Homotetramer.</text>
</comment>
<comment type="subcellular location">
    <subcellularLocation>
        <location evidence="1">Cytoplasm</location>
    </subcellularLocation>
</comment>
<comment type="similarity">
    <text evidence="1">Belongs to the DapB family.</text>
</comment>
<comment type="caution">
    <text evidence="2">Was originally thought to be a dihydrodipicolinate reductase (DHDPR), catalyzing the conversion of dihydrodipicolinate to tetrahydrodipicolinate. However, it was shown in E.coli that the substrate of the enzymatic reaction is not dihydrodipicolinate (DHDP) but in fact (2S,4S)-4-hydroxy-2,3,4,5-tetrahydrodipicolinic acid (HTPA), the product released by the DapA-catalyzed reaction.</text>
</comment>
<evidence type="ECO:0000255" key="1">
    <source>
        <dbReference type="HAMAP-Rule" id="MF_00102"/>
    </source>
</evidence>
<evidence type="ECO:0000305" key="2"/>
<reference key="1">
    <citation type="journal article" date="2011" name="J. Bacteriol.">
        <title>Comparative genomics of 28 Salmonella enterica isolates: evidence for CRISPR-mediated adaptive sublineage evolution.</title>
        <authorList>
            <person name="Fricke W.F."/>
            <person name="Mammel M.K."/>
            <person name="McDermott P.F."/>
            <person name="Tartera C."/>
            <person name="White D.G."/>
            <person name="Leclerc J.E."/>
            <person name="Ravel J."/>
            <person name="Cebula T.A."/>
        </authorList>
    </citation>
    <scope>NUCLEOTIDE SEQUENCE [LARGE SCALE GENOMIC DNA]</scope>
    <source>
        <strain>SL476</strain>
    </source>
</reference>
<protein>
    <recommendedName>
        <fullName evidence="1">4-hydroxy-tetrahydrodipicolinate reductase</fullName>
        <shortName evidence="1">HTPA reductase</shortName>
        <ecNumber evidence="1">1.17.1.8</ecNumber>
    </recommendedName>
</protein>
<name>DAPB_SALHS</name>
<organism>
    <name type="scientific">Salmonella heidelberg (strain SL476)</name>
    <dbReference type="NCBI Taxonomy" id="454169"/>
    <lineage>
        <taxon>Bacteria</taxon>
        <taxon>Pseudomonadati</taxon>
        <taxon>Pseudomonadota</taxon>
        <taxon>Gammaproteobacteria</taxon>
        <taxon>Enterobacterales</taxon>
        <taxon>Enterobacteriaceae</taxon>
        <taxon>Salmonella</taxon>
    </lineage>
</organism>
<gene>
    <name evidence="1" type="primary">dapB</name>
    <name type="ordered locus">SeHA_C0068</name>
</gene>
<sequence>MHEAQIRVAIAGAGGRMGRQLIQAAMAMEGVQLGAALEREGSSLLGSDAGELAGAGKSGVIVQSSLEAVKDDFDVFIDFTRPEGTLTHLAFCRQHGKGMVIGTTGFDDAGKQAIREASQEIAIVFAANFSVGVNVMLKLLEKAAKVMGDYSDIEIIEAHHRHKVDAPSGTALAMGEAIAGALDKNLKDCAVYSREGYTGERVPGTIGFATVRAGDIVGEHTAMFADIGERVEITHKASSRMTFANGALRSALWLKTKKNGLFDMRDVLGLDVL</sequence>
<keyword id="KW-0028">Amino-acid biosynthesis</keyword>
<keyword id="KW-0963">Cytoplasm</keyword>
<keyword id="KW-0220">Diaminopimelate biosynthesis</keyword>
<keyword id="KW-0457">Lysine biosynthesis</keyword>
<keyword id="KW-0520">NAD</keyword>
<keyword id="KW-0521">NADP</keyword>
<keyword id="KW-0560">Oxidoreductase</keyword>
<dbReference type="EC" id="1.17.1.8" evidence="1"/>
<dbReference type="EMBL" id="CP001120">
    <property type="protein sequence ID" value="ACF69200.1"/>
    <property type="molecule type" value="Genomic_DNA"/>
</dbReference>
<dbReference type="RefSeq" id="WP_000544032.1">
    <property type="nucleotide sequence ID" value="NC_011083.1"/>
</dbReference>
<dbReference type="SMR" id="B4TIG4"/>
<dbReference type="KEGG" id="seh:SeHA_C0068"/>
<dbReference type="HOGENOM" id="CLU_047479_2_1_6"/>
<dbReference type="UniPathway" id="UPA00034">
    <property type="reaction ID" value="UER00018"/>
</dbReference>
<dbReference type="Proteomes" id="UP000001866">
    <property type="component" value="Chromosome"/>
</dbReference>
<dbReference type="GO" id="GO:0005829">
    <property type="term" value="C:cytosol"/>
    <property type="evidence" value="ECO:0007669"/>
    <property type="project" value="TreeGrafter"/>
</dbReference>
<dbReference type="GO" id="GO:0008839">
    <property type="term" value="F:4-hydroxy-tetrahydrodipicolinate reductase"/>
    <property type="evidence" value="ECO:0007669"/>
    <property type="project" value="UniProtKB-EC"/>
</dbReference>
<dbReference type="GO" id="GO:0051287">
    <property type="term" value="F:NAD binding"/>
    <property type="evidence" value="ECO:0007669"/>
    <property type="project" value="UniProtKB-UniRule"/>
</dbReference>
<dbReference type="GO" id="GO:0050661">
    <property type="term" value="F:NADP binding"/>
    <property type="evidence" value="ECO:0007669"/>
    <property type="project" value="UniProtKB-UniRule"/>
</dbReference>
<dbReference type="GO" id="GO:0016726">
    <property type="term" value="F:oxidoreductase activity, acting on CH or CH2 groups, NAD or NADP as acceptor"/>
    <property type="evidence" value="ECO:0007669"/>
    <property type="project" value="UniProtKB-UniRule"/>
</dbReference>
<dbReference type="GO" id="GO:0019877">
    <property type="term" value="P:diaminopimelate biosynthetic process"/>
    <property type="evidence" value="ECO:0007669"/>
    <property type="project" value="UniProtKB-UniRule"/>
</dbReference>
<dbReference type="GO" id="GO:0009089">
    <property type="term" value="P:lysine biosynthetic process via diaminopimelate"/>
    <property type="evidence" value="ECO:0007669"/>
    <property type="project" value="UniProtKB-UniRule"/>
</dbReference>
<dbReference type="CDD" id="cd02274">
    <property type="entry name" value="DHDPR_N"/>
    <property type="match status" value="1"/>
</dbReference>
<dbReference type="FunFam" id="3.30.360.10:FF:000004">
    <property type="entry name" value="4-hydroxy-tetrahydrodipicolinate reductase"/>
    <property type="match status" value="1"/>
</dbReference>
<dbReference type="FunFam" id="3.40.50.720:FF:000048">
    <property type="entry name" value="4-hydroxy-tetrahydrodipicolinate reductase"/>
    <property type="match status" value="1"/>
</dbReference>
<dbReference type="Gene3D" id="3.30.360.10">
    <property type="entry name" value="Dihydrodipicolinate Reductase, domain 2"/>
    <property type="match status" value="1"/>
</dbReference>
<dbReference type="Gene3D" id="3.40.50.720">
    <property type="entry name" value="NAD(P)-binding Rossmann-like Domain"/>
    <property type="match status" value="1"/>
</dbReference>
<dbReference type="HAMAP" id="MF_00102">
    <property type="entry name" value="DapB"/>
    <property type="match status" value="1"/>
</dbReference>
<dbReference type="InterPro" id="IPR022663">
    <property type="entry name" value="DapB_C"/>
</dbReference>
<dbReference type="InterPro" id="IPR000846">
    <property type="entry name" value="DapB_N"/>
</dbReference>
<dbReference type="InterPro" id="IPR022664">
    <property type="entry name" value="DapB_N_CS"/>
</dbReference>
<dbReference type="InterPro" id="IPR023940">
    <property type="entry name" value="DHDPR_bac"/>
</dbReference>
<dbReference type="InterPro" id="IPR036291">
    <property type="entry name" value="NAD(P)-bd_dom_sf"/>
</dbReference>
<dbReference type="NCBIfam" id="TIGR00036">
    <property type="entry name" value="dapB"/>
    <property type="match status" value="1"/>
</dbReference>
<dbReference type="PANTHER" id="PTHR20836:SF0">
    <property type="entry name" value="4-HYDROXY-TETRAHYDRODIPICOLINATE REDUCTASE 1, CHLOROPLASTIC-RELATED"/>
    <property type="match status" value="1"/>
</dbReference>
<dbReference type="PANTHER" id="PTHR20836">
    <property type="entry name" value="DIHYDRODIPICOLINATE REDUCTASE"/>
    <property type="match status" value="1"/>
</dbReference>
<dbReference type="Pfam" id="PF05173">
    <property type="entry name" value="DapB_C"/>
    <property type="match status" value="1"/>
</dbReference>
<dbReference type="Pfam" id="PF01113">
    <property type="entry name" value="DapB_N"/>
    <property type="match status" value="1"/>
</dbReference>
<dbReference type="PIRSF" id="PIRSF000161">
    <property type="entry name" value="DHPR"/>
    <property type="match status" value="1"/>
</dbReference>
<dbReference type="SUPFAM" id="SSF55347">
    <property type="entry name" value="Glyceraldehyde-3-phosphate dehydrogenase-like, C-terminal domain"/>
    <property type="match status" value="1"/>
</dbReference>
<dbReference type="SUPFAM" id="SSF51735">
    <property type="entry name" value="NAD(P)-binding Rossmann-fold domains"/>
    <property type="match status" value="1"/>
</dbReference>
<dbReference type="PROSITE" id="PS01298">
    <property type="entry name" value="DAPB"/>
    <property type="match status" value="1"/>
</dbReference>
<accession>B4TIG4</accession>
<feature type="chain" id="PRO_1000093998" description="4-hydroxy-tetrahydrodipicolinate reductase">
    <location>
        <begin position="1"/>
        <end position="273"/>
    </location>
</feature>
<feature type="active site" description="Proton donor/acceptor" evidence="1">
    <location>
        <position position="159"/>
    </location>
</feature>
<feature type="active site" description="Proton donor" evidence="1">
    <location>
        <position position="163"/>
    </location>
</feature>
<feature type="binding site" evidence="1">
    <location>
        <begin position="12"/>
        <end position="17"/>
    </location>
    <ligand>
        <name>NAD(+)</name>
        <dbReference type="ChEBI" id="CHEBI:57540"/>
    </ligand>
</feature>
<feature type="binding site" evidence="1">
    <location>
        <position position="38"/>
    </location>
    <ligand>
        <name>NAD(+)</name>
        <dbReference type="ChEBI" id="CHEBI:57540"/>
    </ligand>
</feature>
<feature type="binding site" evidence="1">
    <location>
        <position position="39"/>
    </location>
    <ligand>
        <name>NADP(+)</name>
        <dbReference type="ChEBI" id="CHEBI:58349"/>
    </ligand>
</feature>
<feature type="binding site" evidence="1">
    <location>
        <begin position="102"/>
        <end position="104"/>
    </location>
    <ligand>
        <name>NAD(+)</name>
        <dbReference type="ChEBI" id="CHEBI:57540"/>
    </ligand>
</feature>
<feature type="binding site" evidence="1">
    <location>
        <begin position="126"/>
        <end position="129"/>
    </location>
    <ligand>
        <name>NAD(+)</name>
        <dbReference type="ChEBI" id="CHEBI:57540"/>
    </ligand>
</feature>
<feature type="binding site" evidence="1">
    <location>
        <position position="160"/>
    </location>
    <ligand>
        <name>(S)-2,3,4,5-tetrahydrodipicolinate</name>
        <dbReference type="ChEBI" id="CHEBI:16845"/>
    </ligand>
</feature>
<feature type="binding site" evidence="1">
    <location>
        <begin position="169"/>
        <end position="170"/>
    </location>
    <ligand>
        <name>(S)-2,3,4,5-tetrahydrodipicolinate</name>
        <dbReference type="ChEBI" id="CHEBI:16845"/>
    </ligand>
</feature>